<gene>
    <name type="primary">Aqp12</name>
</gene>
<feature type="chain" id="PRO_0000063972" description="Aquaporin-12">
    <location>
        <begin position="1"/>
        <end position="290"/>
    </location>
</feature>
<feature type="transmembrane region" description="Helical; Name=1" evidence="2">
    <location>
        <begin position="1"/>
        <end position="21"/>
    </location>
</feature>
<feature type="transmembrane region" description="Helical; Name=2" evidence="2">
    <location>
        <begin position="67"/>
        <end position="87"/>
    </location>
</feature>
<feature type="transmembrane region" description="Helical; Name=3" evidence="2">
    <location>
        <begin position="112"/>
        <end position="138"/>
    </location>
</feature>
<feature type="transmembrane region" description="Helical; Name=4" evidence="2">
    <location>
        <begin position="158"/>
        <end position="178"/>
    </location>
</feature>
<feature type="transmembrane region" description="Helical; Name=5" evidence="2">
    <location>
        <begin position="191"/>
        <end position="211"/>
    </location>
</feature>
<feature type="transmembrane region" description="Helical; Name=6" evidence="2">
    <location>
        <begin position="228"/>
        <end position="248"/>
    </location>
</feature>
<feature type="region of interest" description="Disordered" evidence="3">
    <location>
        <begin position="271"/>
        <end position="290"/>
    </location>
</feature>
<feature type="short sequence motif" description="NPA 1">
    <location>
        <begin position="93"/>
        <end position="95"/>
    </location>
</feature>
<feature type="short sequence motif" description="NPA 2">
    <location>
        <begin position="212"/>
        <end position="214"/>
    </location>
</feature>
<reference key="1">
    <citation type="journal article" date="2005" name="Biochem. Biophys. Res. Commun.">
        <title>Identification of a novel aquaporin, AQP12, expressed in pancreatic acinar cells.</title>
        <authorList>
            <person name="Itoh T."/>
            <person name="Rai T."/>
            <person name="Kuwahara M."/>
            <person name="Ko S.B."/>
            <person name="Uchida S."/>
            <person name="Sasaki S."/>
            <person name="Ishibashi K."/>
        </authorList>
    </citation>
    <scope>NUCLEOTIDE SEQUENCE [MRNA]</scope>
    <scope>TISSUE SPECIFICITY</scope>
</reference>
<reference key="2">
    <citation type="journal article" date="2004" name="Genome Res.">
        <title>The status, quality, and expansion of the NIH full-length cDNA project: the Mammalian Gene Collection (MGC).</title>
        <authorList>
            <consortium name="The MGC Project Team"/>
        </authorList>
    </citation>
    <scope>NUCLEOTIDE SEQUENCE [LARGE SCALE MRNA]</scope>
</reference>
<reference key="3">
    <citation type="journal article" date="2010" name="Cell">
        <title>A tissue-specific atlas of mouse protein phosphorylation and expression.</title>
        <authorList>
            <person name="Huttlin E.L."/>
            <person name="Jedrychowski M.P."/>
            <person name="Elias J.E."/>
            <person name="Goswami T."/>
            <person name="Rad R."/>
            <person name="Beausoleil S.A."/>
            <person name="Villen J."/>
            <person name="Haas W."/>
            <person name="Sowa M.E."/>
            <person name="Gygi S.P."/>
        </authorList>
    </citation>
    <scope>IDENTIFICATION BY MASS SPECTROMETRY [LARGE SCALE ANALYSIS]</scope>
    <source>
        <tissue>Pancreas</tissue>
    </source>
</reference>
<evidence type="ECO:0000250" key="1"/>
<evidence type="ECO:0000255" key="2"/>
<evidence type="ECO:0000256" key="3">
    <source>
        <dbReference type="SAM" id="MobiDB-lite"/>
    </source>
</evidence>
<evidence type="ECO:0000269" key="4">
    <source>
    </source>
</evidence>
<evidence type="ECO:0000305" key="5"/>
<proteinExistence type="evidence at protein level"/>
<protein>
    <recommendedName>
        <fullName>Aquaporin-12</fullName>
        <shortName>AQP-12</shortName>
    </recommendedName>
</protein>
<name>AQP12_MOUSE</name>
<keyword id="KW-0472">Membrane</keyword>
<keyword id="KW-1185">Reference proteome</keyword>
<keyword id="KW-0677">Repeat</keyword>
<keyword id="KW-0812">Transmembrane</keyword>
<keyword id="KW-1133">Transmembrane helix</keyword>
<keyword id="KW-0813">Transport</keyword>
<dbReference type="EMBL" id="AB084104">
    <property type="protein sequence ID" value="BAC45227.1"/>
    <property type="molecule type" value="mRNA"/>
</dbReference>
<dbReference type="EMBL" id="BC107213">
    <property type="protein sequence ID" value="AAI07214.1"/>
    <property type="molecule type" value="mRNA"/>
</dbReference>
<dbReference type="CCDS" id="CCDS15183.1"/>
<dbReference type="RefSeq" id="NP_808255.1">
    <property type="nucleotide sequence ID" value="NM_177587.2"/>
</dbReference>
<dbReference type="SMR" id="Q8CHJ2"/>
<dbReference type="FunCoup" id="Q8CHJ2">
    <property type="interactions" value="358"/>
</dbReference>
<dbReference type="STRING" id="10090.ENSMUSP00000060622"/>
<dbReference type="iPTMnet" id="Q8CHJ2"/>
<dbReference type="PhosphoSitePlus" id="Q8CHJ2"/>
<dbReference type="PaxDb" id="10090-ENSMUSP00000060622"/>
<dbReference type="ProteomicsDB" id="265078"/>
<dbReference type="Ensembl" id="ENSMUST00000059676.5">
    <property type="protein sequence ID" value="ENSMUSP00000060622.5"/>
    <property type="gene ID" value="ENSMUSG00000045091.5"/>
</dbReference>
<dbReference type="GeneID" id="208760"/>
<dbReference type="KEGG" id="mmu:208760"/>
<dbReference type="UCSC" id="uc007cdc.2">
    <property type="organism name" value="mouse"/>
</dbReference>
<dbReference type="AGR" id="MGI:2664636"/>
<dbReference type="CTD" id="208760"/>
<dbReference type="MGI" id="MGI:2664636">
    <property type="gene designation" value="Aqp12"/>
</dbReference>
<dbReference type="VEuPathDB" id="HostDB:ENSMUSG00000045091"/>
<dbReference type="eggNOG" id="ENOG502RYFD">
    <property type="taxonomic scope" value="Eukaryota"/>
</dbReference>
<dbReference type="GeneTree" id="ENSGT00530000063816"/>
<dbReference type="HOGENOM" id="CLU_074449_3_0_1"/>
<dbReference type="InParanoid" id="Q8CHJ2"/>
<dbReference type="OMA" id="MIKNLMA"/>
<dbReference type="OrthoDB" id="1580043at2759"/>
<dbReference type="PhylomeDB" id="Q8CHJ2"/>
<dbReference type="TreeFam" id="TF320251"/>
<dbReference type="Reactome" id="R-MMU-432047">
    <property type="pathway name" value="Passive transport by Aquaporins"/>
</dbReference>
<dbReference type="BioGRID-ORCS" id="208760">
    <property type="hits" value="0 hits in 76 CRISPR screens"/>
</dbReference>
<dbReference type="PRO" id="PR:Q8CHJ2"/>
<dbReference type="Proteomes" id="UP000000589">
    <property type="component" value="Chromosome 1"/>
</dbReference>
<dbReference type="RNAct" id="Q8CHJ2">
    <property type="molecule type" value="protein"/>
</dbReference>
<dbReference type="Bgee" id="ENSMUSG00000045091">
    <property type="expression patterns" value="Expressed in pancreas and 12 other cell types or tissues"/>
</dbReference>
<dbReference type="GO" id="GO:0005737">
    <property type="term" value="C:cytoplasm"/>
    <property type="evidence" value="ECO:0000314"/>
    <property type="project" value="MGI"/>
</dbReference>
<dbReference type="GO" id="GO:0016020">
    <property type="term" value="C:membrane"/>
    <property type="evidence" value="ECO:0007669"/>
    <property type="project" value="UniProtKB-SubCell"/>
</dbReference>
<dbReference type="GO" id="GO:0015267">
    <property type="term" value="F:channel activity"/>
    <property type="evidence" value="ECO:0007669"/>
    <property type="project" value="InterPro"/>
</dbReference>
<dbReference type="FunFam" id="1.20.1080.10:FF:000018">
    <property type="entry name" value="Aquaporin"/>
    <property type="match status" value="1"/>
</dbReference>
<dbReference type="Gene3D" id="1.20.1080.10">
    <property type="entry name" value="Glycerol uptake facilitator protein"/>
    <property type="match status" value="1"/>
</dbReference>
<dbReference type="InterPro" id="IPR051883">
    <property type="entry name" value="AQP11/12_channel"/>
</dbReference>
<dbReference type="InterPro" id="IPR023271">
    <property type="entry name" value="Aquaporin-like"/>
</dbReference>
<dbReference type="InterPro" id="IPR016697">
    <property type="entry name" value="Aquaporin_11/12"/>
</dbReference>
<dbReference type="InterPro" id="IPR023265">
    <property type="entry name" value="Aquaporin_12"/>
</dbReference>
<dbReference type="InterPro" id="IPR000425">
    <property type="entry name" value="MIP"/>
</dbReference>
<dbReference type="PANTHER" id="PTHR21191">
    <property type="entry name" value="AQUAPORIN"/>
    <property type="match status" value="1"/>
</dbReference>
<dbReference type="PANTHER" id="PTHR21191:SF8">
    <property type="entry name" value="AQUAPORIN-12A-RELATED"/>
    <property type="match status" value="1"/>
</dbReference>
<dbReference type="Pfam" id="PF00230">
    <property type="entry name" value="MIP"/>
    <property type="match status" value="1"/>
</dbReference>
<dbReference type="PIRSF" id="PIRSF017529">
    <property type="entry name" value="Aquaporin_11/12"/>
    <property type="match status" value="1"/>
</dbReference>
<dbReference type="PRINTS" id="PR02025">
    <property type="entry name" value="AQUAPORIN12"/>
</dbReference>
<dbReference type="PRINTS" id="PR00783">
    <property type="entry name" value="MINTRINSICP"/>
</dbReference>
<dbReference type="SUPFAM" id="SSF81338">
    <property type="entry name" value="Aquaporin-like"/>
    <property type="match status" value="1"/>
</dbReference>
<organism>
    <name type="scientific">Mus musculus</name>
    <name type="common">Mouse</name>
    <dbReference type="NCBI Taxonomy" id="10090"/>
    <lineage>
        <taxon>Eukaryota</taxon>
        <taxon>Metazoa</taxon>
        <taxon>Chordata</taxon>
        <taxon>Craniata</taxon>
        <taxon>Vertebrata</taxon>
        <taxon>Euteleostomi</taxon>
        <taxon>Mammalia</taxon>
        <taxon>Eutheria</taxon>
        <taxon>Euarchontoglires</taxon>
        <taxon>Glires</taxon>
        <taxon>Rodentia</taxon>
        <taxon>Myomorpha</taxon>
        <taxon>Muroidea</taxon>
        <taxon>Muridae</taxon>
        <taxon>Murinae</taxon>
        <taxon>Mus</taxon>
        <taxon>Mus</taxon>
    </lineage>
</organism>
<comment type="function">
    <text evidence="1">Aquaporins facilitate the transport of water and small neutral solutes across cell membranes.</text>
</comment>
<comment type="subcellular location">
    <subcellularLocation>
        <location evidence="5">Membrane</location>
        <topology evidence="5">Multi-pass membrane protein</topology>
    </subcellularLocation>
</comment>
<comment type="tissue specificity">
    <text evidence="4">Restricted to pancreatic acinar cells.</text>
</comment>
<comment type="domain">
    <text>Aquaporins contain two tandem repeats each containing three membrane-spanning domains and a pore-forming loop with the signature motif Asn-Pro-Ala (NPA).</text>
</comment>
<comment type="similarity">
    <text evidence="5">Belongs to the MIP/aquaporin (TC 1.A.8) family. AQP11/AQP12 subfamily.</text>
</comment>
<accession>Q8CHJ2</accession>
<accession>Q3KNM4</accession>
<sequence length="290" mass="31290">MASLNVSLCFFFATCAICEVARRASKALLPAGTYASFARGAVGAAQLAACCLEMRVLVELGPWAGGFGPDLLLTLVFLLFLVHGVTFDGASANPTVALQEFLMVEASLPNTLLKLSAQVLGAQAACALTQRCWAWELSELHLLQSLMAAHCSSTLRTSVLQGMLVEGACTFFFHLSLLHLQHSLLVYRVPALALLVTLMAYTAGPYTSAFFNPALAASVTFHCPGNTLLEYAHVYCLGPVAGMILAVLLHQGHLPRLFQRNLFYRQKSKYRTPRGKLSPGSVDAKMHKGE</sequence>